<comment type="function">
    <text evidence="2">Has thioesterase activity against fatty acid thioesters with 14 -18 carbons, including palmitoyl-CoA, S-palmitoyl-N-acetylcysteamine, and palmitoylated proteins. In contrast to PPT2, PPT1 can hydrolyze palmitoylated proteins and palmitoylcysteine.</text>
</comment>
<comment type="catalytic activity">
    <reaction evidence="2">
        <text>S-hexadecanoyl-L-cysteinyl-[protein] + H2O = L-cysteinyl-[protein] + hexadecanoate + H(+)</text>
        <dbReference type="Rhea" id="RHEA:19233"/>
        <dbReference type="Rhea" id="RHEA-COMP:10131"/>
        <dbReference type="Rhea" id="RHEA-COMP:11032"/>
        <dbReference type="ChEBI" id="CHEBI:7896"/>
        <dbReference type="ChEBI" id="CHEBI:15377"/>
        <dbReference type="ChEBI" id="CHEBI:15378"/>
        <dbReference type="ChEBI" id="CHEBI:29950"/>
        <dbReference type="ChEBI" id="CHEBI:74151"/>
        <dbReference type="EC" id="3.1.2.22"/>
    </reaction>
</comment>
<comment type="catalytic activity">
    <reaction evidence="2">
        <text>hexadecanoyl-CoA + H2O = hexadecanoate + CoA + H(+)</text>
        <dbReference type="Rhea" id="RHEA:16645"/>
        <dbReference type="ChEBI" id="CHEBI:7896"/>
        <dbReference type="ChEBI" id="CHEBI:15377"/>
        <dbReference type="ChEBI" id="CHEBI:15378"/>
        <dbReference type="ChEBI" id="CHEBI:57287"/>
        <dbReference type="ChEBI" id="CHEBI:57379"/>
        <dbReference type="EC" id="3.1.2.2"/>
    </reaction>
    <physiologicalReaction direction="left-to-right" evidence="2">
        <dbReference type="Rhea" id="RHEA:16646"/>
    </physiologicalReaction>
</comment>
<comment type="catalytic activity">
    <reaction evidence="2">
        <text>S-hexadecanoyl-N-acetylcysteamine + H2O = N-acetylcysteamine + hexadecanoate + H(+)</text>
        <dbReference type="Rhea" id="RHEA:84099"/>
        <dbReference type="ChEBI" id="CHEBI:7896"/>
        <dbReference type="ChEBI" id="CHEBI:15377"/>
        <dbReference type="ChEBI" id="CHEBI:15378"/>
        <dbReference type="ChEBI" id="CHEBI:74410"/>
        <dbReference type="ChEBI" id="CHEBI:233601"/>
    </reaction>
</comment>
<comment type="catalytic activity">
    <reaction evidence="2">
        <text>S-hexadecanoyl-N-acetylcysteine methyl ester + H2O = N-acetylcysteine methyl ester + hexadecanoate + H(+)</text>
        <dbReference type="Rhea" id="RHEA:84103"/>
        <dbReference type="ChEBI" id="CHEBI:7896"/>
        <dbReference type="ChEBI" id="CHEBI:15377"/>
        <dbReference type="ChEBI" id="CHEBI:15378"/>
        <dbReference type="ChEBI" id="CHEBI:233604"/>
        <dbReference type="ChEBI" id="CHEBI:233605"/>
    </reaction>
</comment>
<comment type="subunit">
    <text evidence="6">Interacts with CLN5, ATP5F1A and ATP5F1B (PubMed:19941651).</text>
</comment>
<comment type="subcellular location">
    <subcellularLocation>
        <location evidence="6 7">Lysosome</location>
    </subcellularLocation>
    <subcellularLocation>
        <location evidence="7">Secreted</location>
    </subcellularLocation>
    <subcellularLocation>
        <location evidence="2">Golgi apparatus</location>
    </subcellularLocation>
    <subcellularLocation>
        <location evidence="2">Endoplasmic reticulum</location>
    </subcellularLocation>
</comment>
<comment type="tissue specificity">
    <text evidence="4 7">Highest level in testis and kidney, lower in heart, brain and lung and lowest in skeletal muscle.</text>
</comment>
<comment type="developmental stage">
    <text evidence="4">Expressed in the retina at a higher level than that in the brain at all developmental stages and this high level of expression in the retina is detectable much earlier than that in the brain (at protein level).</text>
</comment>
<comment type="PTM">
    <text evidence="7">Glycosylated.</text>
</comment>
<comment type="disruption phenotype">
    <text evidence="5">Ppt1-knockout mice are viable and fertile; however they developp a neurodegenerative disorder that closely parallels infantile neuronal ceroid lipofuscinosis disease. Mortality reached 50% among the deficient mice by 7 months and few mice survived past 10 months.</text>
</comment>
<comment type="similarity">
    <text evidence="8">Belongs to the palmitoyl-protein thioesterase family.</text>
</comment>
<comment type="sequence caution" evidence="8">
    <conflict type="erroneous initiation">
        <sequence resource="EMBL-CDS" id="AAC25398"/>
    </conflict>
</comment>
<dbReference type="EC" id="3.1.2.2" evidence="2"/>
<dbReference type="EC" id="3.1.2.22" evidence="2"/>
<dbReference type="EMBL" id="AF071025">
    <property type="protein sequence ID" value="AAC25398.1"/>
    <property type="status" value="ALT_INIT"/>
    <property type="molecule type" value="mRNA"/>
</dbReference>
<dbReference type="EMBL" id="AF087568">
    <property type="protein sequence ID" value="AAD25224.1"/>
    <property type="molecule type" value="mRNA"/>
</dbReference>
<dbReference type="EMBL" id="AK014561">
    <property type="status" value="NOT_ANNOTATED_CDS"/>
    <property type="molecule type" value="mRNA"/>
</dbReference>
<dbReference type="CCDS" id="CCDS38870.1"/>
<dbReference type="RefSeq" id="NP_032943.2">
    <property type="nucleotide sequence ID" value="NM_008917.3"/>
</dbReference>
<dbReference type="SMR" id="O88531"/>
<dbReference type="BioGRID" id="202351">
    <property type="interactions" value="1"/>
</dbReference>
<dbReference type="FunCoup" id="O88531">
    <property type="interactions" value="2417"/>
</dbReference>
<dbReference type="IntAct" id="O88531">
    <property type="interactions" value="2"/>
</dbReference>
<dbReference type="STRING" id="10090.ENSMUSP00000030412"/>
<dbReference type="ESTHER" id="mouse-ppt">
    <property type="family name" value="Palmitoyl-protein_thioesterase"/>
</dbReference>
<dbReference type="GlyConnect" id="2574">
    <property type="glycosylation" value="5 N-Linked glycans (3 sites)"/>
</dbReference>
<dbReference type="GlyCosmos" id="O88531">
    <property type="glycosylation" value="3 sites, 5 glycans"/>
</dbReference>
<dbReference type="GlyGen" id="O88531">
    <property type="glycosylation" value="3 sites, 7 N-linked glycans (3 sites)"/>
</dbReference>
<dbReference type="iPTMnet" id="O88531"/>
<dbReference type="PhosphoSitePlus" id="O88531"/>
<dbReference type="SwissPalm" id="O88531"/>
<dbReference type="jPOST" id="O88531"/>
<dbReference type="PaxDb" id="10090-ENSMUSP00000030412"/>
<dbReference type="PeptideAtlas" id="O88531"/>
<dbReference type="ProteomicsDB" id="289816"/>
<dbReference type="Pumba" id="O88531"/>
<dbReference type="Antibodypedia" id="17941">
    <property type="antibodies" value="447 antibodies from 33 providers"/>
</dbReference>
<dbReference type="DNASU" id="19063"/>
<dbReference type="Ensembl" id="ENSMUST00000030412.11">
    <property type="protein sequence ID" value="ENSMUSP00000030412.5"/>
    <property type="gene ID" value="ENSMUSG00000028657.15"/>
</dbReference>
<dbReference type="GeneID" id="19063"/>
<dbReference type="KEGG" id="mmu:19063"/>
<dbReference type="UCSC" id="uc008uoh.2">
    <property type="organism name" value="mouse"/>
</dbReference>
<dbReference type="AGR" id="MGI:1298204"/>
<dbReference type="CTD" id="5538"/>
<dbReference type="MGI" id="MGI:1298204">
    <property type="gene designation" value="Ppt1"/>
</dbReference>
<dbReference type="VEuPathDB" id="HostDB:ENSMUSG00000028657"/>
<dbReference type="eggNOG" id="KOG2541">
    <property type="taxonomic scope" value="Eukaryota"/>
</dbReference>
<dbReference type="GeneTree" id="ENSGT00940000156790"/>
<dbReference type="HOGENOM" id="CLU_050129_0_0_1"/>
<dbReference type="InParanoid" id="O88531"/>
<dbReference type="OMA" id="KFVMVMF"/>
<dbReference type="OrthoDB" id="10263094at2759"/>
<dbReference type="PhylomeDB" id="O88531"/>
<dbReference type="TreeFam" id="TF323926"/>
<dbReference type="Reactome" id="R-MMU-75105">
    <property type="pathway name" value="Fatty acyl-CoA biosynthesis"/>
</dbReference>
<dbReference type="BioGRID-ORCS" id="19063">
    <property type="hits" value="4 hits in 80 CRISPR screens"/>
</dbReference>
<dbReference type="ChiTaRS" id="Ppt1">
    <property type="organism name" value="mouse"/>
</dbReference>
<dbReference type="PRO" id="PR:O88531"/>
<dbReference type="Proteomes" id="UP000000589">
    <property type="component" value="Chromosome 4"/>
</dbReference>
<dbReference type="RNAct" id="O88531">
    <property type="molecule type" value="protein"/>
</dbReference>
<dbReference type="Bgee" id="ENSMUSG00000028657">
    <property type="expression patterns" value="Expressed in medial vestibular nucleus and 260 other cell types or tissues"/>
</dbReference>
<dbReference type="ExpressionAtlas" id="O88531">
    <property type="expression patterns" value="baseline and differential"/>
</dbReference>
<dbReference type="GO" id="GO:0030424">
    <property type="term" value="C:axon"/>
    <property type="evidence" value="ECO:0000314"/>
    <property type="project" value="MGI"/>
</dbReference>
<dbReference type="GO" id="GO:0005829">
    <property type="term" value="C:cytosol"/>
    <property type="evidence" value="ECO:0000250"/>
    <property type="project" value="UniProtKB"/>
</dbReference>
<dbReference type="GO" id="GO:0030425">
    <property type="term" value="C:dendrite"/>
    <property type="evidence" value="ECO:0000314"/>
    <property type="project" value="MGI"/>
</dbReference>
<dbReference type="GO" id="GO:0005576">
    <property type="term" value="C:extracellular region"/>
    <property type="evidence" value="ECO:0000250"/>
    <property type="project" value="UniProtKB"/>
</dbReference>
<dbReference type="GO" id="GO:0005615">
    <property type="term" value="C:extracellular space"/>
    <property type="evidence" value="ECO:0000314"/>
    <property type="project" value="MGI"/>
</dbReference>
<dbReference type="GO" id="GO:0005794">
    <property type="term" value="C:Golgi apparatus"/>
    <property type="evidence" value="ECO:0000250"/>
    <property type="project" value="UniProtKB"/>
</dbReference>
<dbReference type="GO" id="GO:0005765">
    <property type="term" value="C:lysosomal membrane"/>
    <property type="evidence" value="ECO:0007669"/>
    <property type="project" value="Ensembl"/>
</dbReference>
<dbReference type="GO" id="GO:0005764">
    <property type="term" value="C:lysosome"/>
    <property type="evidence" value="ECO:0000314"/>
    <property type="project" value="UniProtKB"/>
</dbReference>
<dbReference type="GO" id="GO:0045121">
    <property type="term" value="C:membrane raft"/>
    <property type="evidence" value="ECO:0000250"/>
    <property type="project" value="UniProtKB"/>
</dbReference>
<dbReference type="GO" id="GO:0043025">
    <property type="term" value="C:neuronal cell body"/>
    <property type="evidence" value="ECO:0000314"/>
    <property type="project" value="MGI"/>
</dbReference>
<dbReference type="GO" id="GO:0005634">
    <property type="term" value="C:nucleus"/>
    <property type="evidence" value="ECO:0000250"/>
    <property type="project" value="UniProtKB"/>
</dbReference>
<dbReference type="GO" id="GO:0099523">
    <property type="term" value="C:presynaptic cytosol"/>
    <property type="evidence" value="ECO:0000314"/>
    <property type="project" value="SynGO"/>
</dbReference>
<dbReference type="GO" id="GO:0008021">
    <property type="term" value="C:synaptic vesicle"/>
    <property type="evidence" value="ECO:0000250"/>
    <property type="project" value="UniProtKB"/>
</dbReference>
<dbReference type="GO" id="GO:0030672">
    <property type="term" value="C:synaptic vesicle membrane"/>
    <property type="evidence" value="ECO:0000314"/>
    <property type="project" value="SynGO"/>
</dbReference>
<dbReference type="GO" id="GO:0052816">
    <property type="term" value="F:long-chain fatty acyl-CoA hydrolase activity"/>
    <property type="evidence" value="ECO:0000250"/>
    <property type="project" value="UniProtKB"/>
</dbReference>
<dbReference type="GO" id="GO:0035727">
    <property type="term" value="F:lysophosphatidic acid binding"/>
    <property type="evidence" value="ECO:0007669"/>
    <property type="project" value="Ensembl"/>
</dbReference>
<dbReference type="GO" id="GO:0008474">
    <property type="term" value="F:palmitoyl-(protein) hydrolase activity"/>
    <property type="evidence" value="ECO:0000314"/>
    <property type="project" value="MGI"/>
</dbReference>
<dbReference type="GO" id="GO:0019834">
    <property type="term" value="F:phospholipase A2 inhibitor activity"/>
    <property type="evidence" value="ECO:0000315"/>
    <property type="project" value="MGI"/>
</dbReference>
<dbReference type="GO" id="GO:0120146">
    <property type="term" value="F:sulfatide binding"/>
    <property type="evidence" value="ECO:0000250"/>
    <property type="project" value="UniProtKB"/>
</dbReference>
<dbReference type="GO" id="GO:0008344">
    <property type="term" value="P:adult locomotory behavior"/>
    <property type="evidence" value="ECO:0000315"/>
    <property type="project" value="MGI"/>
</dbReference>
<dbReference type="GO" id="GO:0008306">
    <property type="term" value="P:associative learning"/>
    <property type="evidence" value="ECO:0000315"/>
    <property type="project" value="MGI"/>
</dbReference>
<dbReference type="GO" id="GO:0007420">
    <property type="term" value="P:brain development"/>
    <property type="evidence" value="ECO:0007669"/>
    <property type="project" value="Ensembl"/>
</dbReference>
<dbReference type="GO" id="GO:0007625">
    <property type="term" value="P:grooming behavior"/>
    <property type="evidence" value="ECO:0000315"/>
    <property type="project" value="MGI"/>
</dbReference>
<dbReference type="GO" id="GO:0016042">
    <property type="term" value="P:lipid catabolic process"/>
    <property type="evidence" value="ECO:0000250"/>
    <property type="project" value="UniProtKB"/>
</dbReference>
<dbReference type="GO" id="GO:0007042">
    <property type="term" value="P:lysosomal lumen acidification"/>
    <property type="evidence" value="ECO:0000250"/>
    <property type="project" value="UniProtKB"/>
</dbReference>
<dbReference type="GO" id="GO:0007040">
    <property type="term" value="P:lysosome organization"/>
    <property type="evidence" value="ECO:0000315"/>
    <property type="project" value="MGI"/>
</dbReference>
<dbReference type="GO" id="GO:0009057">
    <property type="term" value="P:macromolecule catabolic process"/>
    <property type="evidence" value="ECO:0000315"/>
    <property type="project" value="MGI"/>
</dbReference>
<dbReference type="GO" id="GO:0031579">
    <property type="term" value="P:membrane raft organization"/>
    <property type="evidence" value="ECO:0000250"/>
    <property type="project" value="UniProtKB"/>
</dbReference>
<dbReference type="GO" id="GO:0043066">
    <property type="term" value="P:negative regulation of apoptotic process"/>
    <property type="evidence" value="ECO:0000250"/>
    <property type="project" value="UniProtKB"/>
</dbReference>
<dbReference type="GO" id="GO:0030308">
    <property type="term" value="P:negative regulation of cell growth"/>
    <property type="evidence" value="ECO:0000250"/>
    <property type="project" value="UniProtKB"/>
</dbReference>
<dbReference type="GO" id="GO:0043524">
    <property type="term" value="P:negative regulation of neuron apoptotic process"/>
    <property type="evidence" value="ECO:0000250"/>
    <property type="project" value="UniProtKB"/>
</dbReference>
<dbReference type="GO" id="GO:0034164">
    <property type="term" value="P:negative regulation of toll-like receptor 9 signaling pathway"/>
    <property type="evidence" value="ECO:0007669"/>
    <property type="project" value="Ensembl"/>
</dbReference>
<dbReference type="GO" id="GO:0007399">
    <property type="term" value="P:nervous system development"/>
    <property type="evidence" value="ECO:0000250"/>
    <property type="project" value="UniProtKB"/>
</dbReference>
<dbReference type="GO" id="GO:0007269">
    <property type="term" value="P:neurotransmitter secretion"/>
    <property type="evidence" value="ECO:0000315"/>
    <property type="project" value="MGI"/>
</dbReference>
<dbReference type="GO" id="GO:0006907">
    <property type="term" value="P:pinocytosis"/>
    <property type="evidence" value="ECO:0000266"/>
    <property type="project" value="MGI"/>
</dbReference>
<dbReference type="GO" id="GO:0048549">
    <property type="term" value="P:positive regulation of pinocytosis"/>
    <property type="evidence" value="ECO:0000250"/>
    <property type="project" value="UniProtKB"/>
</dbReference>
<dbReference type="GO" id="GO:0048260">
    <property type="term" value="P:positive regulation of receptor-mediated endocytosis"/>
    <property type="evidence" value="ECO:0000250"/>
    <property type="project" value="UniProtKB"/>
</dbReference>
<dbReference type="GO" id="GO:0030163">
    <property type="term" value="P:protein catabolic process"/>
    <property type="evidence" value="ECO:0000315"/>
    <property type="project" value="MGI"/>
</dbReference>
<dbReference type="GO" id="GO:0002084">
    <property type="term" value="P:protein depalmitoylation"/>
    <property type="evidence" value="ECO:0000250"/>
    <property type="project" value="UniProtKB"/>
</dbReference>
<dbReference type="GO" id="GO:0015031">
    <property type="term" value="P:protein transport"/>
    <property type="evidence" value="ECO:0000250"/>
    <property type="project" value="UniProtKB"/>
</dbReference>
<dbReference type="GO" id="GO:0006898">
    <property type="term" value="P:receptor-mediated endocytosis"/>
    <property type="evidence" value="ECO:0000266"/>
    <property type="project" value="MGI"/>
</dbReference>
<dbReference type="GO" id="GO:0007601">
    <property type="term" value="P:visual perception"/>
    <property type="evidence" value="ECO:0000315"/>
    <property type="project" value="MGI"/>
</dbReference>
<dbReference type="FunFam" id="3.40.50.1820:FF:000098">
    <property type="entry name" value="palmitoyl-protein thioesterase 1"/>
    <property type="match status" value="1"/>
</dbReference>
<dbReference type="Gene3D" id="3.40.50.1820">
    <property type="entry name" value="alpha/beta hydrolase"/>
    <property type="match status" value="1"/>
</dbReference>
<dbReference type="InterPro" id="IPR029058">
    <property type="entry name" value="AB_hydrolase_fold"/>
</dbReference>
<dbReference type="InterPro" id="IPR002472">
    <property type="entry name" value="Palm_thioest"/>
</dbReference>
<dbReference type="PANTHER" id="PTHR11247:SF8">
    <property type="entry name" value="PALMITOYL-PROTEIN THIOESTERASE 1"/>
    <property type="match status" value="1"/>
</dbReference>
<dbReference type="PANTHER" id="PTHR11247">
    <property type="entry name" value="PALMITOYL-PROTEIN THIOESTERASE/DOLICHYLDIPHOSPHATASE 1"/>
    <property type="match status" value="1"/>
</dbReference>
<dbReference type="Pfam" id="PF02089">
    <property type="entry name" value="Palm_thioest"/>
    <property type="match status" value="1"/>
</dbReference>
<dbReference type="PRINTS" id="PR00414">
    <property type="entry name" value="PPTHIESTRASE"/>
</dbReference>
<dbReference type="SUPFAM" id="SSF53474">
    <property type="entry name" value="alpha/beta-Hydrolases"/>
    <property type="match status" value="1"/>
</dbReference>
<keyword id="KW-1015">Disulfide bond</keyword>
<keyword id="KW-0256">Endoplasmic reticulum</keyword>
<keyword id="KW-0325">Glycoprotein</keyword>
<keyword id="KW-0333">Golgi apparatus</keyword>
<keyword id="KW-0378">Hydrolase</keyword>
<keyword id="KW-0458">Lysosome</keyword>
<keyword id="KW-1185">Reference proteome</keyword>
<keyword id="KW-0964">Secreted</keyword>
<keyword id="KW-0732">Signal</keyword>
<sequence>MASSCSRRLLAAALLPWCCAAWALGHLDPPSPPPLVIWHGMGDSCCNPMSMGVIKKMVEKEIPGIYVLSLEIGKNMMEDVENSFFLNVNVQVNMVCQILEKDPKLQQGYNAIGFSQGGQFLRAVAQRCPTPPMMTLISVGGQHQGVFGLPRCPGESSHICDFIRKSLNAGAYSKLVQERLVQAQYWHDPIKESVYRNYSIFLADINQERCVNESYKKNLMALKKFVMVKFFNDSIVDPVDSEWFGFYRSGQAKETIPLQESTLYTEDRLGLKKMDKAGKLVFLAKEGDHLQISKEWFTAHIIPFLK</sequence>
<reference key="1">
    <citation type="journal article" date="1998" name="Genome Res.">
        <title>Mouse palmitoyl protein thioesterase: gene structure and expression of cDNA.</title>
        <authorList>
            <person name="Salonen T."/>
            <person name="Hellsten E."/>
            <person name="Horelli-Kuitunen N."/>
            <person name="Peltonen L."/>
            <person name="Jalanko A."/>
        </authorList>
    </citation>
    <scope>NUCLEOTIDE SEQUENCE [MRNA]</scope>
    <scope>SUBCELLULAR LOCATION</scope>
    <scope>TISSUE SPECIFICITY</scope>
    <scope>GLYCOSYLATION</scope>
    <source>
        <strain>129/Sv</strain>
        <tissue>Liver</tissue>
    </source>
</reference>
<reference key="2">
    <citation type="journal article" date="1999" name="Gene">
        <title>Palmitoyl-protein thioesterase gene expression in the developing mouse brain and retina: implications for early loss of vision in infantile neuronal ceroid lipofuscinosis.</title>
        <authorList>
            <person name="Zhang Z."/>
            <person name="Mandal A.K."/>
            <person name="Wang N."/>
            <person name="Keck C.L."/>
            <person name="Zimonjic D.B."/>
            <person name="Popescu N.C."/>
            <person name="Mukherjee A.B."/>
        </authorList>
    </citation>
    <scope>NUCLEOTIDE SEQUENCE [MRNA]</scope>
    <scope>TISSUE SPECIFICITY</scope>
    <scope>DEVELOPMENTAL STAGE</scope>
    <source>
        <strain>BALB/cJ</strain>
        <tissue>Brain</tissue>
    </source>
</reference>
<reference key="3">
    <citation type="journal article" date="2005" name="Science">
        <title>The transcriptional landscape of the mammalian genome.</title>
        <authorList>
            <person name="Carninci P."/>
            <person name="Kasukawa T."/>
            <person name="Katayama S."/>
            <person name="Gough J."/>
            <person name="Frith M.C."/>
            <person name="Maeda N."/>
            <person name="Oyama R."/>
            <person name="Ravasi T."/>
            <person name="Lenhard B."/>
            <person name="Wells C."/>
            <person name="Kodzius R."/>
            <person name="Shimokawa K."/>
            <person name="Bajic V.B."/>
            <person name="Brenner S.E."/>
            <person name="Batalov S."/>
            <person name="Forrest A.R."/>
            <person name="Zavolan M."/>
            <person name="Davis M.J."/>
            <person name="Wilming L.G."/>
            <person name="Aidinis V."/>
            <person name="Allen J.E."/>
            <person name="Ambesi-Impiombato A."/>
            <person name="Apweiler R."/>
            <person name="Aturaliya R.N."/>
            <person name="Bailey T.L."/>
            <person name="Bansal M."/>
            <person name="Baxter L."/>
            <person name="Beisel K.W."/>
            <person name="Bersano T."/>
            <person name="Bono H."/>
            <person name="Chalk A.M."/>
            <person name="Chiu K.P."/>
            <person name="Choudhary V."/>
            <person name="Christoffels A."/>
            <person name="Clutterbuck D.R."/>
            <person name="Crowe M.L."/>
            <person name="Dalla E."/>
            <person name="Dalrymple B.P."/>
            <person name="de Bono B."/>
            <person name="Della Gatta G."/>
            <person name="di Bernardo D."/>
            <person name="Down T."/>
            <person name="Engstrom P."/>
            <person name="Fagiolini M."/>
            <person name="Faulkner G."/>
            <person name="Fletcher C.F."/>
            <person name="Fukushima T."/>
            <person name="Furuno M."/>
            <person name="Futaki S."/>
            <person name="Gariboldi M."/>
            <person name="Georgii-Hemming P."/>
            <person name="Gingeras T.R."/>
            <person name="Gojobori T."/>
            <person name="Green R.E."/>
            <person name="Gustincich S."/>
            <person name="Harbers M."/>
            <person name="Hayashi Y."/>
            <person name="Hensch T.K."/>
            <person name="Hirokawa N."/>
            <person name="Hill D."/>
            <person name="Huminiecki L."/>
            <person name="Iacono M."/>
            <person name="Ikeo K."/>
            <person name="Iwama A."/>
            <person name="Ishikawa T."/>
            <person name="Jakt M."/>
            <person name="Kanapin A."/>
            <person name="Katoh M."/>
            <person name="Kawasawa Y."/>
            <person name="Kelso J."/>
            <person name="Kitamura H."/>
            <person name="Kitano H."/>
            <person name="Kollias G."/>
            <person name="Krishnan S.P."/>
            <person name="Kruger A."/>
            <person name="Kummerfeld S.K."/>
            <person name="Kurochkin I.V."/>
            <person name="Lareau L.F."/>
            <person name="Lazarevic D."/>
            <person name="Lipovich L."/>
            <person name="Liu J."/>
            <person name="Liuni S."/>
            <person name="McWilliam S."/>
            <person name="Madan Babu M."/>
            <person name="Madera M."/>
            <person name="Marchionni L."/>
            <person name="Matsuda H."/>
            <person name="Matsuzawa S."/>
            <person name="Miki H."/>
            <person name="Mignone F."/>
            <person name="Miyake S."/>
            <person name="Morris K."/>
            <person name="Mottagui-Tabar S."/>
            <person name="Mulder N."/>
            <person name="Nakano N."/>
            <person name="Nakauchi H."/>
            <person name="Ng P."/>
            <person name="Nilsson R."/>
            <person name="Nishiguchi S."/>
            <person name="Nishikawa S."/>
            <person name="Nori F."/>
            <person name="Ohara O."/>
            <person name="Okazaki Y."/>
            <person name="Orlando V."/>
            <person name="Pang K.C."/>
            <person name="Pavan W.J."/>
            <person name="Pavesi G."/>
            <person name="Pesole G."/>
            <person name="Petrovsky N."/>
            <person name="Piazza S."/>
            <person name="Reed J."/>
            <person name="Reid J.F."/>
            <person name="Ring B.Z."/>
            <person name="Ringwald M."/>
            <person name="Rost B."/>
            <person name="Ruan Y."/>
            <person name="Salzberg S.L."/>
            <person name="Sandelin A."/>
            <person name="Schneider C."/>
            <person name="Schoenbach C."/>
            <person name="Sekiguchi K."/>
            <person name="Semple C.A."/>
            <person name="Seno S."/>
            <person name="Sessa L."/>
            <person name="Sheng Y."/>
            <person name="Shibata Y."/>
            <person name="Shimada H."/>
            <person name="Shimada K."/>
            <person name="Silva D."/>
            <person name="Sinclair B."/>
            <person name="Sperling S."/>
            <person name="Stupka E."/>
            <person name="Sugiura K."/>
            <person name="Sultana R."/>
            <person name="Takenaka Y."/>
            <person name="Taki K."/>
            <person name="Tammoja K."/>
            <person name="Tan S.L."/>
            <person name="Tang S."/>
            <person name="Taylor M.S."/>
            <person name="Tegner J."/>
            <person name="Teichmann S.A."/>
            <person name="Ueda H.R."/>
            <person name="van Nimwegen E."/>
            <person name="Verardo R."/>
            <person name="Wei C.L."/>
            <person name="Yagi K."/>
            <person name="Yamanishi H."/>
            <person name="Zabarovsky E."/>
            <person name="Zhu S."/>
            <person name="Zimmer A."/>
            <person name="Hide W."/>
            <person name="Bult C."/>
            <person name="Grimmond S.M."/>
            <person name="Teasdale R.D."/>
            <person name="Liu E.T."/>
            <person name="Brusic V."/>
            <person name="Quackenbush J."/>
            <person name="Wahlestedt C."/>
            <person name="Mattick J.S."/>
            <person name="Hume D.A."/>
            <person name="Kai C."/>
            <person name="Sasaki D."/>
            <person name="Tomaru Y."/>
            <person name="Fukuda S."/>
            <person name="Kanamori-Katayama M."/>
            <person name="Suzuki M."/>
            <person name="Aoki J."/>
            <person name="Arakawa T."/>
            <person name="Iida J."/>
            <person name="Imamura K."/>
            <person name="Itoh M."/>
            <person name="Kato T."/>
            <person name="Kawaji H."/>
            <person name="Kawagashira N."/>
            <person name="Kawashima T."/>
            <person name="Kojima M."/>
            <person name="Kondo S."/>
            <person name="Konno H."/>
            <person name="Nakano K."/>
            <person name="Ninomiya N."/>
            <person name="Nishio T."/>
            <person name="Okada M."/>
            <person name="Plessy C."/>
            <person name="Shibata K."/>
            <person name="Shiraki T."/>
            <person name="Suzuki S."/>
            <person name="Tagami M."/>
            <person name="Waki K."/>
            <person name="Watahiki A."/>
            <person name="Okamura-Oho Y."/>
            <person name="Suzuki H."/>
            <person name="Kawai J."/>
            <person name="Hayashizaki Y."/>
        </authorList>
    </citation>
    <scope>NUCLEOTIDE SEQUENCE [LARGE SCALE MRNA] OF 41-306</scope>
    <source>
        <strain>C57BL/6J</strain>
        <tissue>Skin</tissue>
    </source>
</reference>
<reference key="4">
    <citation type="journal article" date="2009" name="BMC Cell Biol.">
        <title>Novel interactions of CLN5 support molecular networking between neuronal ceroid lipofuscinosis proteins.</title>
        <authorList>
            <person name="Lyly A."/>
            <person name="von Schantz C."/>
            <person name="Heine C."/>
            <person name="Schmiedt M.L."/>
            <person name="Sipilae T."/>
            <person name="Jalanko A."/>
            <person name="Kyttaelae A."/>
        </authorList>
    </citation>
    <scope>INTERACTION WITH CLN5; ATP5F1A AND ATP5F1B</scope>
    <scope>SUBCELLULAR LOCATION</scope>
</reference>
<reference key="5">
    <citation type="journal article" date="2010" name="Cell">
        <title>A tissue-specific atlas of mouse protein phosphorylation and expression.</title>
        <authorList>
            <person name="Huttlin E.L."/>
            <person name="Jedrychowski M.P."/>
            <person name="Elias J.E."/>
            <person name="Goswami T."/>
            <person name="Rad R."/>
            <person name="Beausoleil S.A."/>
            <person name="Villen J."/>
            <person name="Haas W."/>
            <person name="Sowa M.E."/>
            <person name="Gygi S.P."/>
        </authorList>
    </citation>
    <scope>IDENTIFICATION BY MASS SPECTROMETRY [LARGE SCALE ANALYSIS]</scope>
    <source>
        <tissue>Brain</tissue>
        <tissue>Brown adipose tissue</tissue>
        <tissue>Heart</tissue>
        <tissue>Kidney</tissue>
        <tissue>Liver</tissue>
        <tissue>Lung</tissue>
        <tissue>Pancreas</tissue>
        <tissue>Spleen</tissue>
        <tissue>Testis</tissue>
    </source>
</reference>
<reference key="6">
    <citation type="journal article" date="2001" name="Proc. Natl. Acad. Sci. U.S.A.">
        <title>Disruption of PPT1 or PPT2 causes neuronal ceroid lipofuscinosis in knockout mice.</title>
        <authorList>
            <person name="Gupta P."/>
            <person name="Soyombo A.A."/>
            <person name="Atashband A."/>
            <person name="Wisniewski K.E."/>
            <person name="Shelton J.M."/>
            <person name="Richardson J.A."/>
            <person name="Hammer R.E."/>
            <person name="Hofmann S.L."/>
        </authorList>
    </citation>
    <scope>DISRUPTION PHENOTYPE</scope>
</reference>
<proteinExistence type="evidence at protein level"/>
<protein>
    <recommendedName>
        <fullName>Palmitoyl-protein thioesterase 1</fullName>
        <shortName>PPT-1</shortName>
        <ecNumber evidence="2">3.1.2.2</ecNumber>
        <ecNumber evidence="2">3.1.2.22</ecNumber>
    </recommendedName>
    <alternativeName>
        <fullName>Palmitoyl-protein hydrolase 1</fullName>
    </alternativeName>
</protein>
<evidence type="ECO:0000250" key="1">
    <source>
        <dbReference type="UniProtKB" id="P45478"/>
    </source>
</evidence>
<evidence type="ECO:0000250" key="2">
    <source>
        <dbReference type="UniProtKB" id="P50897"/>
    </source>
</evidence>
<evidence type="ECO:0000255" key="3"/>
<evidence type="ECO:0000269" key="4">
    <source>
    </source>
</evidence>
<evidence type="ECO:0000269" key="5">
    <source>
    </source>
</evidence>
<evidence type="ECO:0000269" key="6">
    <source>
    </source>
</evidence>
<evidence type="ECO:0000269" key="7">
    <source>
    </source>
</evidence>
<evidence type="ECO:0000305" key="8"/>
<feature type="signal peptide" evidence="1">
    <location>
        <begin position="1"/>
        <end position="27"/>
    </location>
</feature>
<feature type="chain" id="PRO_0000025552" description="Palmitoyl-protein thioesterase 1">
    <location>
        <begin position="28"/>
        <end position="306"/>
    </location>
</feature>
<feature type="active site" evidence="1">
    <location>
        <position position="115"/>
    </location>
</feature>
<feature type="active site" evidence="1">
    <location>
        <position position="233"/>
    </location>
</feature>
<feature type="active site" evidence="1">
    <location>
        <position position="289"/>
    </location>
</feature>
<feature type="glycosylation site" description="N-linked (GlcNAc...) asparagine" evidence="3">
    <location>
        <position position="197"/>
    </location>
</feature>
<feature type="glycosylation site" description="N-linked (GlcNAc...) asparagine" evidence="3">
    <location>
        <position position="212"/>
    </location>
</feature>
<feature type="glycosylation site" description="N-linked (GlcNAc...) asparagine" evidence="3">
    <location>
        <position position="232"/>
    </location>
</feature>
<feature type="disulfide bond" evidence="2">
    <location>
        <begin position="45"/>
        <end position="46"/>
    </location>
</feature>
<feature type="disulfide bond" evidence="2">
    <location>
        <begin position="96"/>
        <end position="128"/>
    </location>
</feature>
<feature type="disulfide bond" evidence="2">
    <location>
        <begin position="152"/>
        <end position="160"/>
    </location>
</feature>
<feature type="sequence conflict" description="In Ref. 2; AAD25224." evidence="8" ref="2">
    <original>A</original>
    <variation>R</variation>
    <location>
        <position position="11"/>
    </location>
</feature>
<feature type="sequence conflict" description="In Ref. 2; AAD25224." evidence="8" ref="2">
    <original>C</original>
    <variation>S</variation>
    <location>
        <position position="18"/>
    </location>
</feature>
<feature type="sequence conflict" description="In Ref. 2; AAD25224." evidence="8" ref="2">
    <location>
        <position position="109"/>
    </location>
</feature>
<feature type="sequence conflict" description="In Ref. 2; AAD25224." evidence="8" ref="2">
    <original>G</original>
    <variation>GY</variation>
    <location>
        <position position="118"/>
    </location>
</feature>
<feature type="sequence conflict" description="In Ref. 3; AK014561." evidence="8" ref="3">
    <original>R</original>
    <variation>L</variation>
    <location>
        <position position="151"/>
    </location>
</feature>
<feature type="sequence conflict" description="In Ref. 2; AAD25224." evidence="8" ref="2">
    <original>TIP</original>
    <variation>NIA</variation>
    <location>
        <begin position="255"/>
        <end position="257"/>
    </location>
</feature>
<feature type="sequence conflict" description="In Ref. 2; AAD25224." evidence="8" ref="2">
    <original>K</original>
    <variation>R</variation>
    <location>
        <position position="276"/>
    </location>
</feature>
<name>PPT1_MOUSE</name>
<gene>
    <name type="primary">Ppt1</name>
    <name type="synonym">Cln1</name>
    <name type="synonym">Ppt</name>
</gene>
<accession>O88531</accession>
<accession>Q9D681</accession>
<accession>Q9WTY3</accession>
<organism>
    <name type="scientific">Mus musculus</name>
    <name type="common">Mouse</name>
    <dbReference type="NCBI Taxonomy" id="10090"/>
    <lineage>
        <taxon>Eukaryota</taxon>
        <taxon>Metazoa</taxon>
        <taxon>Chordata</taxon>
        <taxon>Craniata</taxon>
        <taxon>Vertebrata</taxon>
        <taxon>Euteleostomi</taxon>
        <taxon>Mammalia</taxon>
        <taxon>Eutheria</taxon>
        <taxon>Euarchontoglires</taxon>
        <taxon>Glires</taxon>
        <taxon>Rodentia</taxon>
        <taxon>Myomorpha</taxon>
        <taxon>Muroidea</taxon>
        <taxon>Muridae</taxon>
        <taxon>Murinae</taxon>
        <taxon>Mus</taxon>
        <taxon>Mus</taxon>
    </lineage>
</organism>